<protein>
    <recommendedName>
        <fullName>Electrogenic sodium bicarbonate cotransporter 1</fullName>
        <shortName>Sodium bicarbonate cotransporter</shortName>
    </recommendedName>
    <alternativeName>
        <fullName>Na(+)/HCO3(-) cotransporter</fullName>
    </alternativeName>
    <alternativeName>
        <fullName>Solute carrier family 4 member 4</fullName>
    </alternativeName>
</protein>
<dbReference type="EMBL" id="AF001958">
    <property type="protein sequence ID" value="AAB61339.1"/>
    <property type="molecule type" value="mRNA"/>
</dbReference>
<dbReference type="PIR" id="T31336">
    <property type="entry name" value="T31336"/>
</dbReference>
<dbReference type="SMR" id="O13134"/>
<dbReference type="GlyCosmos" id="O13134">
    <property type="glycosylation" value="4 sites, No reported glycans"/>
</dbReference>
<dbReference type="GO" id="GO:0016323">
    <property type="term" value="C:basolateral plasma membrane"/>
    <property type="evidence" value="ECO:0007669"/>
    <property type="project" value="UniProtKB-SubCell"/>
</dbReference>
<dbReference type="GO" id="GO:0008509">
    <property type="term" value="F:monoatomic anion transmembrane transporter activity"/>
    <property type="evidence" value="ECO:0007669"/>
    <property type="project" value="InterPro"/>
</dbReference>
<dbReference type="GO" id="GO:0008510">
    <property type="term" value="F:sodium:bicarbonate symporter activity"/>
    <property type="evidence" value="ECO:0000314"/>
    <property type="project" value="UniProtKB"/>
</dbReference>
<dbReference type="GO" id="GO:0005452">
    <property type="term" value="F:solute:inorganic anion antiporter activity"/>
    <property type="evidence" value="ECO:0007669"/>
    <property type="project" value="InterPro"/>
</dbReference>
<dbReference type="GO" id="GO:0051453">
    <property type="term" value="P:regulation of intracellular pH"/>
    <property type="evidence" value="ECO:0007669"/>
    <property type="project" value="TreeGrafter"/>
</dbReference>
<dbReference type="FunFam" id="1.10.287.570:FF:000001">
    <property type="entry name" value="Anion exchange protein"/>
    <property type="match status" value="1"/>
</dbReference>
<dbReference type="FunFam" id="3.40.930.10:FF:000002">
    <property type="entry name" value="Anion exchange protein"/>
    <property type="match status" value="1"/>
</dbReference>
<dbReference type="Gene3D" id="1.10.287.570">
    <property type="entry name" value="Helical hairpin bin"/>
    <property type="match status" value="1"/>
</dbReference>
<dbReference type="Gene3D" id="3.40.930.10">
    <property type="entry name" value="Mannitol-specific EII, Chain A"/>
    <property type="match status" value="1"/>
</dbReference>
<dbReference type="InterPro" id="IPR013769">
    <property type="entry name" value="Band3_cytoplasmic_dom"/>
</dbReference>
<dbReference type="InterPro" id="IPR011531">
    <property type="entry name" value="HCO3_transpt-like_TM_dom"/>
</dbReference>
<dbReference type="InterPro" id="IPR003020">
    <property type="entry name" value="HCO3_transpt_euk"/>
</dbReference>
<dbReference type="InterPro" id="IPR003024">
    <property type="entry name" value="Na/HCO3_transpt"/>
</dbReference>
<dbReference type="InterPro" id="IPR016152">
    <property type="entry name" value="PTrfase/Anion_transptr"/>
</dbReference>
<dbReference type="NCBIfam" id="TIGR00834">
    <property type="entry name" value="ae"/>
    <property type="match status" value="1"/>
</dbReference>
<dbReference type="PANTHER" id="PTHR11453">
    <property type="entry name" value="ANION EXCHANGE PROTEIN"/>
    <property type="match status" value="1"/>
</dbReference>
<dbReference type="PANTHER" id="PTHR11453:SF10">
    <property type="entry name" value="ELECTROGENIC SODIUM BICARBONATE COTRANSPORTER 1"/>
    <property type="match status" value="1"/>
</dbReference>
<dbReference type="Pfam" id="PF07565">
    <property type="entry name" value="Band_3_cyto"/>
    <property type="match status" value="1"/>
</dbReference>
<dbReference type="Pfam" id="PF00955">
    <property type="entry name" value="HCO3_cotransp"/>
    <property type="match status" value="1"/>
</dbReference>
<dbReference type="PRINTS" id="PR01231">
    <property type="entry name" value="HCO3TRNSPORT"/>
</dbReference>
<dbReference type="PRINTS" id="PR01232">
    <property type="entry name" value="NAHCO3TRSPRT"/>
</dbReference>
<dbReference type="SUPFAM" id="SSF55804">
    <property type="entry name" value="Phoshotransferase/anion transport protein"/>
    <property type="match status" value="1"/>
</dbReference>
<proteinExistence type="evidence at transcript level"/>
<organism>
    <name type="scientific">Ambystoma tigrinum</name>
    <name type="common">Eastern tiger salamander</name>
    <dbReference type="NCBI Taxonomy" id="8305"/>
    <lineage>
        <taxon>Eukaryota</taxon>
        <taxon>Metazoa</taxon>
        <taxon>Chordata</taxon>
        <taxon>Craniata</taxon>
        <taxon>Vertebrata</taxon>
        <taxon>Euteleostomi</taxon>
        <taxon>Amphibia</taxon>
        <taxon>Batrachia</taxon>
        <taxon>Caudata</taxon>
        <taxon>Salamandroidea</taxon>
        <taxon>Ambystomatidae</taxon>
        <taxon>Ambystoma</taxon>
    </lineage>
</organism>
<accession>O13134</accession>
<evidence type="ECO:0000250" key="1">
    <source>
        <dbReference type="UniProtKB" id="Q9Y6R1"/>
    </source>
</evidence>
<evidence type="ECO:0000255" key="2"/>
<evidence type="ECO:0000256" key="3">
    <source>
        <dbReference type="SAM" id="MobiDB-lite"/>
    </source>
</evidence>
<evidence type="ECO:0000269" key="4">
    <source>
    </source>
</evidence>
<evidence type="ECO:0000269" key="5">
    <source>
    </source>
</evidence>
<evidence type="ECO:0000305" key="6"/>
<reference key="1">
    <citation type="journal article" date="1997" name="Nature">
        <title>Expression cloning and characterization of a renal electrogenic Na+/HCO3- cotransporter.</title>
        <authorList>
            <person name="Romero M.F."/>
            <person name="Hediger M.A."/>
            <person name="Boulpaep E.L."/>
            <person name="Boron W.F."/>
        </authorList>
    </citation>
    <scope>NUCLEOTIDE SEQUENCE [MRNA]</scope>
    <scope>FUNCTION</scope>
    <scope>TISSUE SPECIFICITY</scope>
    <scope>TRANSPORTER ACTIVITY</scope>
    <source>
        <tissue>Kidney</tissue>
    </source>
</reference>
<reference key="2">
    <citation type="journal article" date="2000" name="J. Am. Soc. Nephrol.">
        <title>Immunoelectron microscopic localization of the electrogenic Na/HCO(3) cotransporter in rat and ambystoma kidney.</title>
        <authorList>
            <person name="Maunsbach A.B."/>
            <person name="Vorum H."/>
            <person name="Kwon T.-H."/>
            <person name="Nielsen S."/>
            <person name="Simonsen B."/>
            <person name="Choi I."/>
            <person name="Schmitt B.M."/>
            <person name="Boron W.F."/>
            <person name="Aalkjaer C."/>
        </authorList>
    </citation>
    <scope>SUBCELLULAR LOCATION</scope>
</reference>
<name>S4A4_AMBTI</name>
<comment type="function">
    <text evidence="5">Electrogenic sodium/bicarbonate cotransporter with a Na(+):HCO3(-) stoichiometry varying from 1:2 to 1:3. May regulate bicarbonate influx/efflux at the basolateral membrane of cells and regulate intracellular pH.</text>
</comment>
<comment type="catalytic activity">
    <reaction evidence="5">
        <text>2 hydrogencarbonate(out) + Na(+)(out) = 2 hydrogencarbonate(in) + Na(+)(in)</text>
        <dbReference type="Rhea" id="RHEA:72215"/>
        <dbReference type="ChEBI" id="CHEBI:17544"/>
        <dbReference type="ChEBI" id="CHEBI:29101"/>
    </reaction>
</comment>
<comment type="catalytic activity">
    <reaction evidence="5">
        <text>3 hydrogencarbonate(out) + Na(+)(out) = 3 hydrogencarbonate(in) + Na(+)(in)</text>
        <dbReference type="Rhea" id="RHEA:72219"/>
        <dbReference type="ChEBI" id="CHEBI:17544"/>
        <dbReference type="ChEBI" id="CHEBI:29101"/>
    </reaction>
</comment>
<comment type="subunit">
    <text evidence="1">Homodimer.</text>
</comment>
<comment type="subcellular location">
    <subcellularLocation>
        <location evidence="4">Basolateral cell membrane</location>
        <topology evidence="2">Multi-pass membrane protein</topology>
    </subcellularLocation>
    <subcellularLocation>
        <location evidence="1">Cell membrane</location>
        <topology evidence="2">Multi-pass membrane protein</topology>
    </subcellularLocation>
</comment>
<comment type="tissue specificity">
    <text evidence="5">Expressed in kidney and to a lower extent in bladder, brain, intestine, large intestine and eye.</text>
</comment>
<comment type="similarity">
    <text evidence="6">Belongs to the anion exchanger (TC 2.A.31) family.</text>
</comment>
<keyword id="KW-1003">Cell membrane</keyword>
<keyword id="KW-0325">Glycoprotein</keyword>
<keyword id="KW-0406">Ion transport</keyword>
<keyword id="KW-0472">Membrane</keyword>
<keyword id="KW-0915">Sodium</keyword>
<keyword id="KW-0739">Sodium transport</keyword>
<keyword id="KW-0769">Symport</keyword>
<keyword id="KW-0812">Transmembrane</keyword>
<keyword id="KW-1133">Transmembrane helix</keyword>
<keyword id="KW-0813">Transport</keyword>
<feature type="chain" id="PRO_0000079232" description="Electrogenic sodium bicarbonate cotransporter 1">
    <location>
        <begin position="1"/>
        <end position="1035"/>
    </location>
</feature>
<feature type="topological domain" description="Cytoplasmic" evidence="1">
    <location>
        <begin position="1"/>
        <end position="421"/>
    </location>
</feature>
<feature type="transmembrane region" description="Helical; Name=1" evidence="1">
    <location>
        <begin position="422"/>
        <end position="446"/>
    </location>
</feature>
<feature type="topological domain" description="Extracellular" evidence="1">
    <location>
        <begin position="447"/>
        <end position="456"/>
    </location>
</feature>
<feature type="transmembrane region" description="Helical; Name=2" evidence="1">
    <location>
        <begin position="457"/>
        <end position="475"/>
    </location>
</feature>
<feature type="topological domain" description="Cytoplasmic" evidence="1">
    <location>
        <position position="476"/>
    </location>
</feature>
<feature type="transmembrane region" description="Discontinuously helical; Name=3" evidence="1">
    <location>
        <begin position="477"/>
        <end position="497"/>
    </location>
</feature>
<feature type="topological domain" description="Extracellular" evidence="1">
    <location>
        <begin position="498"/>
        <end position="505"/>
    </location>
</feature>
<feature type="transmembrane region" description="Helical; Name=4" evidence="1">
    <location>
        <begin position="506"/>
        <end position="526"/>
    </location>
</feature>
<feature type="topological domain" description="Cytoplasmic" evidence="1">
    <location>
        <begin position="527"/>
        <end position="540"/>
    </location>
</feature>
<feature type="transmembrane region" description="Helical; Name=5" evidence="1">
    <location>
        <begin position="541"/>
        <end position="564"/>
    </location>
</feature>
<feature type="topological domain" description="Extracellular" evidence="1">
    <location>
        <begin position="565"/>
        <end position="648"/>
    </location>
</feature>
<feature type="transmembrane region" description="Helical; Name=6" evidence="1">
    <location>
        <begin position="649"/>
        <end position="666"/>
    </location>
</feature>
<feature type="topological domain" description="Cytoplasmic" evidence="1">
    <location>
        <begin position="667"/>
        <end position="681"/>
    </location>
</feature>
<feature type="transmembrane region" description="Helical; Name=7" evidence="1">
    <location>
        <begin position="682"/>
        <end position="701"/>
    </location>
</feature>
<feature type="topological domain" description="Extracellular" evidence="1">
    <location>
        <begin position="702"/>
        <end position="735"/>
    </location>
</feature>
<feature type="transmembrane region" description="Helical; Name=8" evidence="1">
    <location>
        <begin position="736"/>
        <end position="763"/>
    </location>
</feature>
<feature type="topological domain" description="Cytoplasmic" evidence="1">
    <location>
        <begin position="764"/>
        <end position="775"/>
    </location>
</feature>
<feature type="transmembrane region" description="Helical; Name=9" evidence="1">
    <location>
        <begin position="776"/>
        <end position="792"/>
    </location>
</feature>
<feature type="topological domain" description="Extracellular" evidence="1">
    <location>
        <position position="793"/>
    </location>
</feature>
<feature type="transmembrane region" description="Discontinuously helical; Name=10" evidence="1">
    <location>
        <begin position="794"/>
        <end position="811"/>
    </location>
</feature>
<feature type="topological domain" description="Cytoplasmic" evidence="1">
    <location>
        <begin position="812"/>
        <end position="833"/>
    </location>
</feature>
<feature type="transmembrane region" description="Helical; Name=11" evidence="1">
    <location>
        <begin position="834"/>
        <end position="850"/>
    </location>
</feature>
<feature type="topological domain" description="Extracellular" evidence="1">
    <location>
        <begin position="851"/>
        <end position="857"/>
    </location>
</feature>
<feature type="transmembrane region" description="Helical; Name=12" evidence="1">
    <location>
        <begin position="858"/>
        <end position="874"/>
    </location>
</feature>
<feature type="topological domain" description="Cytoplasmic" evidence="1">
    <location>
        <begin position="875"/>
        <end position="916"/>
    </location>
</feature>
<feature type="intramembrane region" description="Discontinuously helical" evidence="1">
    <location>
        <begin position="917"/>
        <end position="942"/>
    </location>
</feature>
<feature type="topological domain" description="Cytoplasmic" evidence="1">
    <location>
        <begin position="943"/>
        <end position="1035"/>
    </location>
</feature>
<feature type="region of interest" description="Disordered" evidence="3">
    <location>
        <begin position="192"/>
        <end position="222"/>
    </location>
</feature>
<feature type="region of interest" description="Disordered" evidence="3">
    <location>
        <begin position="348"/>
        <end position="389"/>
    </location>
</feature>
<feature type="region of interest" description="Disordered" evidence="3">
    <location>
        <begin position="968"/>
        <end position="1035"/>
    </location>
</feature>
<feature type="compositionally biased region" description="Polar residues" evidence="3">
    <location>
        <begin position="192"/>
        <end position="217"/>
    </location>
</feature>
<feature type="compositionally biased region" description="Basic and acidic residues" evidence="3">
    <location>
        <begin position="376"/>
        <end position="389"/>
    </location>
</feature>
<feature type="compositionally biased region" description="Basic and acidic residues" evidence="3">
    <location>
        <begin position="1007"/>
        <end position="1035"/>
    </location>
</feature>
<feature type="glycosylation site" description="N-linked (GlcNAc...) asparagine" evidence="2">
    <location>
        <position position="591"/>
    </location>
</feature>
<feature type="glycosylation site" description="N-linked (GlcNAc...) asparagine" evidence="2">
    <location>
        <position position="596"/>
    </location>
</feature>
<feature type="glycosylation site" description="N-linked (GlcNAc...) asparagine" evidence="2">
    <location>
        <position position="609"/>
    </location>
</feature>
<feature type="glycosylation site" description="N-linked (GlcNAc...) asparagine" evidence="2">
    <location>
        <position position="617"/>
    </location>
</feature>
<sequence>MSSEKECLENMLNGYAESGRVLSRTSLVINQAVNRSIFTSTVSPAAERIRFILGEEDDSPAPPQLFTELDELLAVDGQEMEWKETARWIKFEEKVEQGGERWSKPHVATLSLHSLFELRTCIEKGTILLDLEATSLPQIVEIVINNQIELGLLKADMKENVTRTLLRKHRHQTKKSNLRSLADIGKTVSSASRLFSTPDNGSPTMTHRNLTSTSLNDVSDKPDKEQLKNKFMKKLPRDAEASNVLVGEVDFLESPFIAFVRLQQAVMLGSLTEVPVPTRFLFILLGPKGKAKSYHEIGRSIATLMSDEVFHDIAYKAKNREDLIAGIDEFLDEVIVLPLGEWDPTIRIEPPKSLPSSDKRKNMYSGGDNLQMNGDAPHDDGGGGHGDSEELQRTGRFCGGLIKDIQRKAPFFASDFYDALSIQSLSAILFIYLGTVTNAITFGGLLGDATENMQGVLESFLGTAVSGAVFCLFGGQPLTILSSTGPVLVFERLLFNFSKDNDFDYLEFRLWIGLWSAFQCLILVATDASFLVKYFTRFTEEGFSSLISFIFIYDAFKKMIKLADYYPINSHFKVDYITQYSCACFPPEPANSSWFNMTTAATTTQFLTNASTDMAYNGTIDWSLLSKKECLKYGGLLVGSNCKYVPDITLMSFILFLGTYTCSMALKKFKTSRYFPTTARKLISDFAIILSILIFCGLDALLGVDTPKLIVPSEFKPTSPNRGWFVPPFGGNPWWVYLAAAIPALLVTILIFMDQQITGVIVNRKEHKLKKGAGYHLDLFWVAILMVVCSFMALPWYVAATVISIAHIDSLKMETETSAPGEQPKFLGVREQRVTGTVVFLLTGLSVFMAPILKFIPMPVLYGVFLYMGVASLNGVQFMDRLKLLLMPPKYQPDFIYLRHVPLRRVHLFTFLQVVCLAMLWILKSTVAAIIFPVMILALVAVRKAMDYFFSQHDLSFLDDVIPEKDKKKKEDEKKKKKKKGSIDSDVEDSDCPYPEKVPSIKIPMDIMEKEPFLIDSKPSDRENSPTFLERHTSC</sequence>
<gene>
    <name type="primary">SLC4A4</name>
    <name type="synonym">NBC</name>
    <name type="synonym">NBCE1</name>
</gene>